<accession>Q7Z2K6</accession>
<accession>B2RNA4</accession>
<accession>B3KSB1</accession>
<accession>Q8N5T5</accession>
<accession>Q9H5M1</accession>
<feature type="chain" id="PRO_0000259492" description="Endoplasmic reticulum metallopeptidase 1">
    <location>
        <begin position="1"/>
        <end position="904"/>
    </location>
</feature>
<feature type="topological domain" description="Cytoplasmic" evidence="10">
    <location>
        <begin position="1"/>
        <end position="63"/>
    </location>
</feature>
<feature type="transmembrane region" description="Helical; Name=1" evidence="4">
    <location>
        <begin position="64"/>
        <end position="84"/>
    </location>
</feature>
<feature type="topological domain" description="Lumenal" evidence="10">
    <location>
        <begin position="85"/>
        <end position="399"/>
    </location>
</feature>
<feature type="transmembrane region" description="Helical; Name=2" evidence="4">
    <location>
        <begin position="400"/>
        <end position="420"/>
    </location>
</feature>
<feature type="topological domain" description="Cytoplasmic" evidence="10">
    <location>
        <begin position="421"/>
        <end position="457"/>
    </location>
</feature>
<feature type="transmembrane region" description="Helical; Name=3" evidence="4">
    <location>
        <begin position="458"/>
        <end position="478"/>
    </location>
</feature>
<feature type="topological domain" description="Lumenal" evidence="10">
    <location>
        <begin position="479"/>
        <end position="489"/>
    </location>
</feature>
<feature type="transmembrane region" description="Helical; Name=4" evidence="4">
    <location>
        <begin position="490"/>
        <end position="510"/>
    </location>
</feature>
<feature type="topological domain" description="Cytoplasmic" evidence="10">
    <location>
        <begin position="511"/>
        <end position="519"/>
    </location>
</feature>
<feature type="transmembrane region" description="Helical; Name=5" evidence="4">
    <location>
        <begin position="520"/>
        <end position="540"/>
    </location>
</feature>
<feature type="topological domain" description="Lumenal" evidence="10">
    <location>
        <position position="541"/>
    </location>
</feature>
<feature type="transmembrane region" description="Helical; Name=6" evidence="4">
    <location>
        <begin position="542"/>
        <end position="562"/>
    </location>
</feature>
<feature type="topological domain" description="Cytoplasmic" evidence="10">
    <location>
        <begin position="563"/>
        <end position="579"/>
    </location>
</feature>
<feature type="transmembrane region" description="Helical; Name=7" evidence="4">
    <location>
        <begin position="580"/>
        <end position="600"/>
    </location>
</feature>
<feature type="topological domain" description="Lumenal" evidence="10">
    <location>
        <begin position="601"/>
        <end position="621"/>
    </location>
</feature>
<feature type="transmembrane region" description="Helical; Name=8" evidence="4">
    <location>
        <begin position="622"/>
        <end position="642"/>
    </location>
</feature>
<feature type="topological domain" description="Cytoplasmic" evidence="10">
    <location>
        <begin position="643"/>
        <end position="651"/>
    </location>
</feature>
<feature type="transmembrane region" description="Helical; Name=9" evidence="4">
    <location>
        <begin position="652"/>
        <end position="672"/>
    </location>
</feature>
<feature type="topological domain" description="Lumenal" evidence="10">
    <location>
        <begin position="673"/>
        <end position="904"/>
    </location>
</feature>
<feature type="region of interest" description="Disordered" evidence="6">
    <location>
        <begin position="1"/>
        <end position="65"/>
    </location>
</feature>
<feature type="compositionally biased region" description="Gly residues" evidence="6">
    <location>
        <begin position="55"/>
        <end position="65"/>
    </location>
</feature>
<feature type="active site" description="Proton acceptor" evidence="2">
    <location>
        <position position="251"/>
    </location>
</feature>
<feature type="binding site" evidence="2">
    <location>
        <position position="205"/>
    </location>
    <ligand>
        <name>Zn(2+)</name>
        <dbReference type="ChEBI" id="CHEBI:29105"/>
        <label>1</label>
        <note>catalytic</note>
    </ligand>
</feature>
<feature type="binding site" evidence="2">
    <location>
        <position position="217"/>
    </location>
    <ligand>
        <name>Zn(2+)</name>
        <dbReference type="ChEBI" id="CHEBI:29105"/>
        <label>1</label>
        <note>catalytic</note>
    </ligand>
</feature>
<feature type="binding site" evidence="2">
    <location>
        <position position="217"/>
    </location>
    <ligand>
        <name>Zn(2+)</name>
        <dbReference type="ChEBI" id="CHEBI:29105"/>
        <label>2</label>
        <note>catalytic</note>
    </ligand>
</feature>
<feature type="binding site" evidence="2">
    <location>
        <position position="252"/>
    </location>
    <ligand>
        <name>Zn(2+)</name>
        <dbReference type="ChEBI" id="CHEBI:29105"/>
        <label>2</label>
        <note>catalytic</note>
    </ligand>
</feature>
<feature type="binding site" evidence="2">
    <location>
        <position position="278"/>
    </location>
    <ligand>
        <name>Zn(2+)</name>
        <dbReference type="ChEBI" id="CHEBI:29105"/>
        <label>1</label>
        <note>catalytic</note>
    </ligand>
</feature>
<feature type="binding site" evidence="2">
    <location>
        <position position="354"/>
    </location>
    <ligand>
        <name>Zn(2+)</name>
        <dbReference type="ChEBI" id="CHEBI:29105"/>
        <label>2</label>
        <note>catalytic</note>
    </ligand>
</feature>
<feature type="site" description="Transition state stabilizer" evidence="2">
    <location>
        <position position="353"/>
    </location>
</feature>
<feature type="modified residue" description="N-acetylmethionine" evidence="12">
    <location>
        <position position="1"/>
    </location>
</feature>
<feature type="glycosylation site" description="N-linked (GlcNAc...) asparagine" evidence="5">
    <location>
        <position position="182"/>
    </location>
</feature>
<feature type="glycosylation site" description="N-linked (GlcNAc...) asparagine" evidence="7">
    <location>
        <position position="730"/>
    </location>
</feature>
<feature type="disulfide bond" evidence="1">
    <location>
        <begin position="204"/>
        <end position="222"/>
    </location>
</feature>
<feature type="splice variant" id="VSP_056121" description="In isoform 2." evidence="9">
    <location>
        <begin position="1"/>
        <end position="224"/>
    </location>
</feature>
<feature type="splice variant" id="VSP_056122" description="In isoform 2." evidence="9">
    <location>
        <begin position="576"/>
        <end position="904"/>
    </location>
</feature>
<feature type="sequence variant" id="VAR_028945" description="In dbSNP:rs13284203.">
    <original>S</original>
    <variation>N</variation>
    <location>
        <position position="44"/>
    </location>
</feature>
<feature type="sequence conflict" description="In Ref. 1; BAG52673." evidence="10" ref="1">
    <original>G</original>
    <variation>D</variation>
    <location>
        <position position="575"/>
    </location>
</feature>
<feature type="sequence conflict" description="In Ref. 1; BAB15604." evidence="10" ref="1">
    <original>E</original>
    <variation>A</variation>
    <location>
        <position position="728"/>
    </location>
</feature>
<keyword id="KW-0007">Acetylation</keyword>
<keyword id="KW-0025">Alternative splicing</keyword>
<keyword id="KW-1015">Disulfide bond</keyword>
<keyword id="KW-0256">Endoplasmic reticulum</keyword>
<keyword id="KW-0325">Glycoprotein</keyword>
<keyword id="KW-0378">Hydrolase</keyword>
<keyword id="KW-0472">Membrane</keyword>
<keyword id="KW-0479">Metal-binding</keyword>
<keyword id="KW-0482">Metalloprotease</keyword>
<keyword id="KW-0645">Protease</keyword>
<keyword id="KW-1267">Proteomics identification</keyword>
<keyword id="KW-1185">Reference proteome</keyword>
<keyword id="KW-0812">Transmembrane</keyword>
<keyword id="KW-1133">Transmembrane helix</keyword>
<keyword id="KW-0862">Zinc</keyword>
<proteinExistence type="evidence at protein level"/>
<comment type="function">
    <text evidence="3">Within the ovary, required for the organization of somatic cells and oocytes into discrete follicular structures.</text>
</comment>
<comment type="cofactor">
    <cofactor evidence="2">
        <name>Zn(2+)</name>
        <dbReference type="ChEBI" id="CHEBI:29105"/>
    </cofactor>
    <text evidence="2">Binds 2 Zn(2+) ions per subunit.</text>
</comment>
<comment type="interaction">
    <interactant intactId="EBI-10976398">
        <id>Q7Z2K6</id>
    </interactant>
    <interactant intactId="EBI-12701138">
        <id>P41181</id>
        <label>AQP2</label>
    </interactant>
    <organismsDiffer>false</organismsDiffer>
    <experiments>3</experiments>
</comment>
<comment type="interaction">
    <interactant intactId="EBI-10976398">
        <id>Q7Z2K6</id>
    </interactant>
    <interactant intactId="EBI-13059134">
        <id>Q13520</id>
        <label>AQP6</label>
    </interactant>
    <organismsDiffer>false</organismsDiffer>
    <experiments>3</experiments>
</comment>
<comment type="interaction">
    <interactant intactId="EBI-10976398">
        <id>Q7Z2K6</id>
    </interactant>
    <interactant intactId="EBI-12894731">
        <id>Q9UN42</id>
        <label>ATP1B4</label>
    </interactant>
    <organismsDiffer>false</organismsDiffer>
    <experiments>3</experiments>
</comment>
<comment type="interaction">
    <interactant intactId="EBI-10976398">
        <id>Q7Z2K6</id>
    </interactant>
    <interactant intactId="EBI-747430">
        <id>Q9BXK5</id>
        <label>BCL2L13</label>
    </interactant>
    <organismsDiffer>false</organismsDiffer>
    <experiments>3</experiments>
</comment>
<comment type="interaction">
    <interactant intactId="EBI-10976398">
        <id>Q7Z2K6</id>
    </interactant>
    <interactant intactId="EBI-11532900">
        <id>J3KQ12</id>
        <label>BSCL2</label>
    </interactant>
    <organismsDiffer>false</organismsDiffer>
    <experiments>3</experiments>
</comment>
<comment type="interaction">
    <interactant intactId="EBI-10976398">
        <id>Q7Z2K6</id>
    </interactant>
    <interactant intactId="EBI-12824513">
        <id>Q8TD46-4</id>
        <label>CD200R1</label>
    </interactant>
    <organismsDiffer>false</organismsDiffer>
    <experiments>3</experiments>
</comment>
<comment type="interaction">
    <interactant intactId="EBI-10976398">
        <id>Q7Z2K6</id>
    </interactant>
    <interactant intactId="EBI-18400628">
        <id>O00501</id>
        <label>CLDN5</label>
    </interactant>
    <organismsDiffer>false</organismsDiffer>
    <experiments>3</experiments>
</comment>
<comment type="interaction">
    <interactant intactId="EBI-10976398">
        <id>Q7Z2K6</id>
    </interactant>
    <interactant intactId="EBI-740744">
        <id>O95471</id>
        <label>CLDN7</label>
    </interactant>
    <organismsDiffer>false</organismsDiffer>
    <experiments>3</experiments>
</comment>
<comment type="interaction">
    <interactant intactId="EBI-10976398">
        <id>Q7Z2K6</id>
    </interactant>
    <interactant intactId="EBI-18341636">
        <id>O95484</id>
        <label>CLDN9</label>
    </interactant>
    <organismsDiffer>false</organismsDiffer>
    <experiments>3</experiments>
</comment>
<comment type="interaction">
    <interactant intactId="EBI-10976398">
        <id>Q7Z2K6</id>
    </interactant>
    <interactant intactId="EBI-11749983">
        <id>Q9UHP7-3</id>
        <label>CLEC2D</label>
    </interactant>
    <organismsDiffer>false</organismsDiffer>
    <experiments>3</experiments>
</comment>
<comment type="interaction">
    <interactant intactId="EBI-10976398">
        <id>Q7Z2K6</id>
    </interactant>
    <interactant intactId="EBI-6942903">
        <id>Q96BA8</id>
        <label>CREB3L1</label>
    </interactant>
    <organismsDiffer>false</organismsDiffer>
    <experiments>3</experiments>
</comment>
<comment type="interaction">
    <interactant intactId="EBI-10976398">
        <id>Q7Z2K6</id>
    </interactant>
    <interactant intactId="EBI-17973325">
        <id>P60508</id>
        <label>ERVFRD-1</label>
    </interactant>
    <organismsDiffer>false</organismsDiffer>
    <experiments>3</experiments>
</comment>
<comment type="interaction">
    <interactant intactId="EBI-10976398">
        <id>Q7Z2K6</id>
    </interactant>
    <interactant intactId="EBI-18304435">
        <id>Q5JX71</id>
        <label>FAM209A</label>
    </interactant>
    <organismsDiffer>false</organismsDiffer>
    <experiments>3</experiments>
</comment>
<comment type="interaction">
    <interactant intactId="EBI-10976398">
        <id>Q7Z2K6</id>
    </interactant>
    <interactant intactId="EBI-12142257">
        <id>Q8TBE3</id>
        <label>FNDC9</label>
    </interactant>
    <organismsDiffer>false</organismsDiffer>
    <experiments>3</experiments>
</comment>
<comment type="interaction">
    <interactant intactId="EBI-10976398">
        <id>Q7Z2K6</id>
    </interactant>
    <interactant intactId="EBI-17458373">
        <id>P48165</id>
        <label>GJA8</label>
    </interactant>
    <organismsDiffer>false</organismsDiffer>
    <experiments>3</experiments>
</comment>
<comment type="interaction">
    <interactant intactId="EBI-10976398">
        <id>Q7Z2K6</id>
    </interactant>
    <interactant intactId="EBI-18076404">
        <id>O15529</id>
        <label>GPR42</label>
    </interactant>
    <organismsDiffer>false</organismsDiffer>
    <experiments>3</experiments>
</comment>
<comment type="interaction">
    <interactant intactId="EBI-10976398">
        <id>Q7Z2K6</id>
    </interactant>
    <interactant intactId="EBI-13067820">
        <id>Q9NZD1</id>
        <label>GPRC5D</label>
    </interactant>
    <organismsDiffer>false</organismsDiffer>
    <experiments>3</experiments>
</comment>
<comment type="interaction">
    <interactant intactId="EBI-10976398">
        <id>Q7Z2K6</id>
    </interactant>
    <interactant intactId="EBI-2867874">
        <id>Q9UM44</id>
        <label>HHLA2</label>
    </interactant>
    <organismsDiffer>false</organismsDiffer>
    <experiments>3</experiments>
</comment>
<comment type="interaction">
    <interactant intactId="EBI-10976398">
        <id>Q7Z2K6</id>
    </interactant>
    <interactant intactId="EBI-11427100">
        <id>P31937</id>
        <label>HIBADH</label>
    </interactant>
    <organismsDiffer>false</organismsDiffer>
    <experiments>3</experiments>
</comment>
<comment type="interaction">
    <interactant intactId="EBI-10976398">
        <id>Q7Z2K6</id>
    </interactant>
    <interactant intactId="EBI-725665">
        <id>Q9Y5U9</id>
        <label>IER3IP1</label>
    </interactant>
    <organismsDiffer>false</organismsDiffer>
    <experiments>3</experiments>
</comment>
<comment type="interaction">
    <interactant intactId="EBI-10976398">
        <id>Q7Z2K6</id>
    </interactant>
    <interactant intactId="EBI-3905457">
        <id>P38484</id>
        <label>IFNGR2</label>
    </interactant>
    <organismsDiffer>false</organismsDiffer>
    <experiments>3</experiments>
</comment>
<comment type="interaction">
    <interactant intactId="EBI-10976398">
        <id>Q7Z2K6</id>
    </interactant>
    <interactant intactId="EBI-17888181">
        <id>Q9UGI6-2</id>
        <label>KCNN3</label>
    </interactant>
    <organismsDiffer>false</organismsDiffer>
    <experiments>3</experiments>
</comment>
<comment type="interaction">
    <interactant intactId="EBI-10976398">
        <id>Q7Z2K6</id>
    </interactant>
    <interactant intactId="EBI-9018187">
        <id>P26715</id>
        <label>KLRC1</label>
    </interactant>
    <organismsDiffer>false</organismsDiffer>
    <experiments>3</experiments>
</comment>
<comment type="interaction">
    <interactant intactId="EBI-10976398">
        <id>Q7Z2K6</id>
    </interactant>
    <interactant intactId="EBI-17200970">
        <id>Q6UWN5</id>
        <label>LYPD5</label>
    </interactant>
    <organismsDiffer>false</organismsDiffer>
    <experiments>3</experiments>
</comment>
<comment type="interaction">
    <interactant intactId="EBI-10976398">
        <id>Q7Z2K6</id>
    </interactant>
    <interactant intactId="EBI-12201447">
        <id>Q95460-2</id>
        <label>MR1</label>
    </interactant>
    <organismsDiffer>false</organismsDiffer>
    <experiments>3</experiments>
</comment>
<comment type="interaction">
    <interactant intactId="EBI-10976398">
        <id>Q7Z2K6</id>
    </interactant>
    <interactant intactId="EBI-16427978">
        <id>Q9BQ51</id>
        <label>PDCD1LG2</label>
    </interactant>
    <organismsDiffer>false</organismsDiffer>
    <experiments>3</experiments>
</comment>
<comment type="interaction">
    <interactant intactId="EBI-10976398">
        <id>Q7Z2K6</id>
    </interactant>
    <interactant intactId="EBI-594836">
        <id>O00623</id>
        <label>PEX12</label>
    </interactant>
    <organismsDiffer>false</organismsDiffer>
    <experiments>3</experiments>
</comment>
<comment type="interaction">
    <interactant intactId="EBI-10976398">
        <id>Q7Z2K6</id>
    </interactant>
    <interactant intactId="EBI-15853497">
        <id>Q9UBD6</id>
        <label>RHCG</label>
    </interactant>
    <organismsDiffer>false</organismsDiffer>
    <experiments>3</experiments>
</comment>
<comment type="interaction">
    <interactant intactId="EBI-10976398">
        <id>Q7Z2K6</id>
    </interactant>
    <interactant intactId="EBI-12808018">
        <id>Q9UKG4</id>
        <label>SLC13A4</label>
    </interactant>
    <organismsDiffer>false</organismsDiffer>
    <experiments>3</experiments>
</comment>
<comment type="interaction">
    <interactant intactId="EBI-10976398">
        <id>Q7Z2K6</id>
    </interactant>
    <interactant intactId="EBI-12081840">
        <id>A1A5C7-2</id>
        <label>SLC22A23</label>
    </interactant>
    <organismsDiffer>false</organismsDiffer>
    <experiments>3</experiments>
</comment>
<comment type="interaction">
    <interactant intactId="EBI-10976398">
        <id>Q7Z2K6</id>
    </interactant>
    <interactant intactId="EBI-5235586">
        <id>Q8TBB6</id>
        <label>SLC7A14</label>
    </interactant>
    <organismsDiffer>false</organismsDiffer>
    <experiments>3</experiments>
</comment>
<comment type="interaction">
    <interactant intactId="EBI-10976398">
        <id>Q7Z2K6</id>
    </interactant>
    <interactant intactId="EBI-10819434">
        <id>Q9NPE6</id>
        <label>SPAG4</label>
    </interactant>
    <organismsDiffer>false</organismsDiffer>
    <experiments>3</experiments>
</comment>
<comment type="interaction">
    <interactant intactId="EBI-10976398">
        <id>Q7Z2K6</id>
    </interactant>
    <interactant intactId="EBI-17280858">
        <id>Q8WWF3</id>
        <label>SSMEM1</label>
    </interactant>
    <organismsDiffer>false</organismsDiffer>
    <experiments>3</experiments>
</comment>
<comment type="interaction">
    <interactant intactId="EBI-10976398">
        <id>Q7Z2K6</id>
    </interactant>
    <interactant intactId="EBI-10982110">
        <id>Q96Q45-2</id>
        <label>TMEM237</label>
    </interactant>
    <organismsDiffer>false</organismsDiffer>
    <experiments>5</experiments>
</comment>
<comment type="interaction">
    <interactant intactId="EBI-10976398">
        <id>Q7Z2K6</id>
    </interactant>
    <interactant intactId="EBI-10823938">
        <id>Q9NWC5</id>
        <label>TMEM45A</label>
    </interactant>
    <organismsDiffer>false</organismsDiffer>
    <experiments>3</experiments>
</comment>
<comment type="interaction">
    <interactant intactId="EBI-10976398">
        <id>Q7Z2K6</id>
    </interactant>
    <interactant intactId="EBI-11742770">
        <id>Q96HE8</id>
        <label>TMEM80</label>
    </interactant>
    <organismsDiffer>false</organismsDiffer>
    <experiments>3</experiments>
</comment>
<comment type="subcellular location">
    <subcellularLocation>
        <location evidence="3">Endoplasmic reticulum membrane</location>
        <topology evidence="4">Multi-pass membrane protein</topology>
    </subcellularLocation>
</comment>
<comment type="alternative products">
    <event type="alternative splicing"/>
    <isoform>
        <id>Q7Z2K6-1</id>
        <name>1</name>
        <sequence type="displayed"/>
    </isoform>
    <isoform>
        <id>Q7Z2K6-2</id>
        <name>2</name>
        <sequence type="described" ref="VSP_056121 VSP_056122"/>
    </isoform>
</comment>
<comment type="similarity">
    <text evidence="10">Belongs to the peptidase M28 family.</text>
</comment>
<comment type="sequence caution" evidence="10">
    <conflict type="erroneous initiation">
        <sequence resource="EMBL-CDS" id="BAB15604"/>
    </conflict>
</comment>
<reference key="1">
    <citation type="journal article" date="2004" name="Nat. Genet.">
        <title>Complete sequencing and characterization of 21,243 full-length human cDNAs.</title>
        <authorList>
            <person name="Ota T."/>
            <person name="Suzuki Y."/>
            <person name="Nishikawa T."/>
            <person name="Otsuki T."/>
            <person name="Sugiyama T."/>
            <person name="Irie R."/>
            <person name="Wakamatsu A."/>
            <person name="Hayashi K."/>
            <person name="Sato H."/>
            <person name="Nagai K."/>
            <person name="Kimura K."/>
            <person name="Makita H."/>
            <person name="Sekine M."/>
            <person name="Obayashi M."/>
            <person name="Nishi T."/>
            <person name="Shibahara T."/>
            <person name="Tanaka T."/>
            <person name="Ishii S."/>
            <person name="Yamamoto J."/>
            <person name="Saito K."/>
            <person name="Kawai Y."/>
            <person name="Isono Y."/>
            <person name="Nakamura Y."/>
            <person name="Nagahari K."/>
            <person name="Murakami K."/>
            <person name="Yasuda T."/>
            <person name="Iwayanagi T."/>
            <person name="Wagatsuma M."/>
            <person name="Shiratori A."/>
            <person name="Sudo H."/>
            <person name="Hosoiri T."/>
            <person name="Kaku Y."/>
            <person name="Kodaira H."/>
            <person name="Kondo H."/>
            <person name="Sugawara M."/>
            <person name="Takahashi M."/>
            <person name="Kanda K."/>
            <person name="Yokoi T."/>
            <person name="Furuya T."/>
            <person name="Kikkawa E."/>
            <person name="Omura Y."/>
            <person name="Abe K."/>
            <person name="Kamihara K."/>
            <person name="Katsuta N."/>
            <person name="Sato K."/>
            <person name="Tanikawa M."/>
            <person name="Yamazaki M."/>
            <person name="Ninomiya K."/>
            <person name="Ishibashi T."/>
            <person name="Yamashita H."/>
            <person name="Murakawa K."/>
            <person name="Fujimori K."/>
            <person name="Tanai H."/>
            <person name="Kimata M."/>
            <person name="Watanabe M."/>
            <person name="Hiraoka S."/>
            <person name="Chiba Y."/>
            <person name="Ishida S."/>
            <person name="Ono Y."/>
            <person name="Takiguchi S."/>
            <person name="Watanabe S."/>
            <person name="Yosida M."/>
            <person name="Hotuta T."/>
            <person name="Kusano J."/>
            <person name="Kanehori K."/>
            <person name="Takahashi-Fujii A."/>
            <person name="Hara H."/>
            <person name="Tanase T.-O."/>
            <person name="Nomura Y."/>
            <person name="Togiya S."/>
            <person name="Komai F."/>
            <person name="Hara R."/>
            <person name="Takeuchi K."/>
            <person name="Arita M."/>
            <person name="Imose N."/>
            <person name="Musashino K."/>
            <person name="Yuuki H."/>
            <person name="Oshima A."/>
            <person name="Sasaki N."/>
            <person name="Aotsuka S."/>
            <person name="Yoshikawa Y."/>
            <person name="Matsunawa H."/>
            <person name="Ichihara T."/>
            <person name="Shiohata N."/>
            <person name="Sano S."/>
            <person name="Moriya S."/>
            <person name="Momiyama H."/>
            <person name="Satoh N."/>
            <person name="Takami S."/>
            <person name="Terashima Y."/>
            <person name="Suzuki O."/>
            <person name="Nakagawa S."/>
            <person name="Senoh A."/>
            <person name="Mizoguchi H."/>
            <person name="Goto Y."/>
            <person name="Shimizu F."/>
            <person name="Wakebe H."/>
            <person name="Hishigaki H."/>
            <person name="Watanabe T."/>
            <person name="Sugiyama A."/>
            <person name="Takemoto M."/>
            <person name="Kawakami B."/>
            <person name="Yamazaki M."/>
            <person name="Watanabe K."/>
            <person name="Kumagai A."/>
            <person name="Itakura S."/>
            <person name="Fukuzumi Y."/>
            <person name="Fujimori Y."/>
            <person name="Komiyama M."/>
            <person name="Tashiro H."/>
            <person name="Tanigami A."/>
            <person name="Fujiwara T."/>
            <person name="Ono T."/>
            <person name="Yamada K."/>
            <person name="Fujii Y."/>
            <person name="Ozaki K."/>
            <person name="Hirao M."/>
            <person name="Ohmori Y."/>
            <person name="Kawabata A."/>
            <person name="Hikiji T."/>
            <person name="Kobatake N."/>
            <person name="Inagaki H."/>
            <person name="Ikema Y."/>
            <person name="Okamoto S."/>
            <person name="Okitani R."/>
            <person name="Kawakami T."/>
            <person name="Noguchi S."/>
            <person name="Itoh T."/>
            <person name="Shigeta K."/>
            <person name="Senba T."/>
            <person name="Matsumura K."/>
            <person name="Nakajima Y."/>
            <person name="Mizuno T."/>
            <person name="Morinaga M."/>
            <person name="Sasaki M."/>
            <person name="Togashi T."/>
            <person name="Oyama M."/>
            <person name="Hata H."/>
            <person name="Watanabe M."/>
            <person name="Komatsu T."/>
            <person name="Mizushima-Sugano J."/>
            <person name="Satoh T."/>
            <person name="Shirai Y."/>
            <person name="Takahashi Y."/>
            <person name="Nakagawa K."/>
            <person name="Okumura K."/>
            <person name="Nagase T."/>
            <person name="Nomura N."/>
            <person name="Kikuchi H."/>
            <person name="Masuho Y."/>
            <person name="Yamashita R."/>
            <person name="Nakai K."/>
            <person name="Yada T."/>
            <person name="Nakamura Y."/>
            <person name="Ohara O."/>
            <person name="Isogai T."/>
            <person name="Sugano S."/>
        </authorList>
    </citation>
    <scope>NUCLEOTIDE SEQUENCE [LARGE SCALE MRNA] (ISOFORMS 1 AND 2)</scope>
    <source>
        <tissue>Hepatoma</tissue>
        <tissue>Hippocampus</tissue>
        <tissue>Testis</tissue>
    </source>
</reference>
<reference key="2">
    <citation type="journal article" date="2004" name="Nature">
        <title>DNA sequence and analysis of human chromosome 9.</title>
        <authorList>
            <person name="Humphray S.J."/>
            <person name="Oliver K."/>
            <person name="Hunt A.R."/>
            <person name="Plumb R.W."/>
            <person name="Loveland J.E."/>
            <person name="Howe K.L."/>
            <person name="Andrews T.D."/>
            <person name="Searle S."/>
            <person name="Hunt S.E."/>
            <person name="Scott C.E."/>
            <person name="Jones M.C."/>
            <person name="Ainscough R."/>
            <person name="Almeida J.P."/>
            <person name="Ambrose K.D."/>
            <person name="Ashwell R.I.S."/>
            <person name="Babbage A.K."/>
            <person name="Babbage S."/>
            <person name="Bagguley C.L."/>
            <person name="Bailey J."/>
            <person name="Banerjee R."/>
            <person name="Barker D.J."/>
            <person name="Barlow K.F."/>
            <person name="Bates K."/>
            <person name="Beasley H."/>
            <person name="Beasley O."/>
            <person name="Bird C.P."/>
            <person name="Bray-Allen S."/>
            <person name="Brown A.J."/>
            <person name="Brown J.Y."/>
            <person name="Burford D."/>
            <person name="Burrill W."/>
            <person name="Burton J."/>
            <person name="Carder C."/>
            <person name="Carter N.P."/>
            <person name="Chapman J.C."/>
            <person name="Chen Y."/>
            <person name="Clarke G."/>
            <person name="Clark S.Y."/>
            <person name="Clee C.M."/>
            <person name="Clegg S."/>
            <person name="Collier R.E."/>
            <person name="Corby N."/>
            <person name="Crosier M."/>
            <person name="Cummings A.T."/>
            <person name="Davies J."/>
            <person name="Dhami P."/>
            <person name="Dunn M."/>
            <person name="Dutta I."/>
            <person name="Dyer L.W."/>
            <person name="Earthrowl M.E."/>
            <person name="Faulkner L."/>
            <person name="Fleming C.J."/>
            <person name="Frankish A."/>
            <person name="Frankland J.A."/>
            <person name="French L."/>
            <person name="Fricker D.G."/>
            <person name="Garner P."/>
            <person name="Garnett J."/>
            <person name="Ghori J."/>
            <person name="Gilbert J.G.R."/>
            <person name="Glison C."/>
            <person name="Grafham D.V."/>
            <person name="Gribble S."/>
            <person name="Griffiths C."/>
            <person name="Griffiths-Jones S."/>
            <person name="Grocock R."/>
            <person name="Guy J."/>
            <person name="Hall R.E."/>
            <person name="Hammond S."/>
            <person name="Harley J.L."/>
            <person name="Harrison E.S.I."/>
            <person name="Hart E.A."/>
            <person name="Heath P.D."/>
            <person name="Henderson C.D."/>
            <person name="Hopkins B.L."/>
            <person name="Howard P.J."/>
            <person name="Howden P.J."/>
            <person name="Huckle E."/>
            <person name="Johnson C."/>
            <person name="Johnson D."/>
            <person name="Joy A.A."/>
            <person name="Kay M."/>
            <person name="Keenan S."/>
            <person name="Kershaw J.K."/>
            <person name="Kimberley A.M."/>
            <person name="King A."/>
            <person name="Knights A."/>
            <person name="Laird G.K."/>
            <person name="Langford C."/>
            <person name="Lawlor S."/>
            <person name="Leongamornlert D.A."/>
            <person name="Leversha M."/>
            <person name="Lloyd C."/>
            <person name="Lloyd D.M."/>
            <person name="Lovell J."/>
            <person name="Martin S."/>
            <person name="Mashreghi-Mohammadi M."/>
            <person name="Matthews L."/>
            <person name="McLaren S."/>
            <person name="McLay K.E."/>
            <person name="McMurray A."/>
            <person name="Milne S."/>
            <person name="Nickerson T."/>
            <person name="Nisbett J."/>
            <person name="Nordsiek G."/>
            <person name="Pearce A.V."/>
            <person name="Peck A.I."/>
            <person name="Porter K.M."/>
            <person name="Pandian R."/>
            <person name="Pelan S."/>
            <person name="Phillimore B."/>
            <person name="Povey S."/>
            <person name="Ramsey Y."/>
            <person name="Rand V."/>
            <person name="Scharfe M."/>
            <person name="Sehra H.K."/>
            <person name="Shownkeen R."/>
            <person name="Sims S.K."/>
            <person name="Skuce C.D."/>
            <person name="Smith M."/>
            <person name="Steward C.A."/>
            <person name="Swarbreck D."/>
            <person name="Sycamore N."/>
            <person name="Tester J."/>
            <person name="Thorpe A."/>
            <person name="Tracey A."/>
            <person name="Tromans A."/>
            <person name="Thomas D.W."/>
            <person name="Wall M."/>
            <person name="Wallis J.M."/>
            <person name="West A.P."/>
            <person name="Whitehead S.L."/>
            <person name="Willey D.L."/>
            <person name="Williams S.A."/>
            <person name="Wilming L."/>
            <person name="Wray P.W."/>
            <person name="Young L."/>
            <person name="Ashurst J.L."/>
            <person name="Coulson A."/>
            <person name="Blocker H."/>
            <person name="Durbin R.M."/>
            <person name="Sulston J.E."/>
            <person name="Hubbard T."/>
            <person name="Jackson M.J."/>
            <person name="Bentley D.R."/>
            <person name="Beck S."/>
            <person name="Rogers J."/>
            <person name="Dunham I."/>
        </authorList>
    </citation>
    <scope>NUCLEOTIDE SEQUENCE [LARGE SCALE GENOMIC DNA]</scope>
</reference>
<reference key="3">
    <citation type="journal article" date="2004" name="Genome Res.">
        <title>The status, quality, and expansion of the NIH full-length cDNA project: the Mammalian Gene Collection (MGC).</title>
        <authorList>
            <consortium name="The MGC Project Team"/>
        </authorList>
    </citation>
    <scope>NUCLEOTIDE SEQUENCE [LARGE SCALE MRNA] (ISOFORM 1)</scope>
    <source>
        <tissue>Brain</tissue>
    </source>
</reference>
<reference key="4">
    <citation type="journal article" date="2001" name="DNA Res.">
        <title>Prediction of the coding sequences of unidentified human genes. XX. The complete sequences of 100 new cDNA clones from brain which code for large proteins in vitro.</title>
        <authorList>
            <person name="Nagase T."/>
            <person name="Nakayama M."/>
            <person name="Nakajima D."/>
            <person name="Kikuno R."/>
            <person name="Ohara O."/>
        </authorList>
    </citation>
    <scope>NUCLEOTIDE SEQUENCE [LARGE SCALE MRNA] OF 24-904 (ISOFORM 1)</scope>
    <source>
        <tissue>Brain</tissue>
    </source>
</reference>
<reference key="5">
    <citation type="submission" date="2003-01" db="EMBL/GenBank/DDBJ databases">
        <authorList>
            <person name="Ohara O."/>
            <person name="Nagase T."/>
            <person name="Kikuno R."/>
        </authorList>
    </citation>
    <scope>SEQUENCE REVISION</scope>
</reference>
<reference key="6">
    <citation type="journal article" date="2009" name="J. Proteome Res.">
        <title>Glycoproteomics analysis of human liver tissue by combination of multiple enzyme digestion and hydrazide chemistry.</title>
        <authorList>
            <person name="Chen R."/>
            <person name="Jiang X."/>
            <person name="Sun D."/>
            <person name="Han G."/>
            <person name="Wang F."/>
            <person name="Ye M."/>
            <person name="Wang L."/>
            <person name="Zou H."/>
        </authorList>
    </citation>
    <scope>GLYCOSYLATION [LARGE SCALE ANALYSIS] AT ASN-730</scope>
    <source>
        <tissue>Liver</tissue>
    </source>
</reference>
<reference key="7">
    <citation type="journal article" date="2010" name="Sci. Signal.">
        <title>Quantitative phosphoproteomics reveals widespread full phosphorylation site occupancy during mitosis.</title>
        <authorList>
            <person name="Olsen J.V."/>
            <person name="Vermeulen M."/>
            <person name="Santamaria A."/>
            <person name="Kumar C."/>
            <person name="Miller M.L."/>
            <person name="Jensen L.J."/>
            <person name="Gnad F."/>
            <person name="Cox J."/>
            <person name="Jensen T.S."/>
            <person name="Nigg E.A."/>
            <person name="Brunak S."/>
            <person name="Mann M."/>
        </authorList>
    </citation>
    <scope>IDENTIFICATION BY MASS SPECTROMETRY [LARGE SCALE ANALYSIS]</scope>
    <source>
        <tissue>Cervix carcinoma</tissue>
    </source>
</reference>
<reference key="8">
    <citation type="journal article" date="2012" name="Mol. Cell. Proteomics">
        <title>Comparative large-scale characterisation of plant vs. mammal proteins reveals similar and idiosyncratic N-alpha acetylation features.</title>
        <authorList>
            <person name="Bienvenut W.V."/>
            <person name="Sumpton D."/>
            <person name="Martinez A."/>
            <person name="Lilla S."/>
            <person name="Espagne C."/>
            <person name="Meinnel T."/>
            <person name="Giglione C."/>
        </authorList>
    </citation>
    <scope>ACETYLATION [LARGE SCALE ANALYSIS] AT MET-1</scope>
    <scope>IDENTIFICATION BY MASS SPECTROMETRY [LARGE SCALE ANALYSIS]</scope>
</reference>
<gene>
    <name evidence="11" type="primary">ERMP1</name>
    <name evidence="3" type="synonym">FXNA</name>
    <name evidence="8" type="synonym">KIAA1815</name>
</gene>
<protein>
    <recommendedName>
        <fullName evidence="3 11">Endoplasmic reticulum metallopeptidase 1</fullName>
        <ecNumber evidence="10">3.4.-.-</ecNumber>
    </recommendedName>
    <alternativeName>
        <fullName evidence="3">Felix-ina</fullName>
    </alternativeName>
</protein>
<sequence length="904" mass="100231">MEWGSESAAVRRHRVGVERREGAAAAPPPEREARAQEPLVDGCSGGGRTRKRSPGGSGGASRGAGTGLSEVRAALGLALYLIALRTLVQLSLQQLVLRGAAGHRGEFDALQARDYLEHITSIGPRTTGSPENEILTVHYLLEQIKLIEVQSNSLHKISVDVQRPTGSFSIDFLGGFTSYYDNITNVVVKLEPRDGAQHAVLANCHFDSVANSPGASDDAVSCSVMLEVLRVLSTSSEALHHAVIFLFNGAEENVLQASHGFITQHPWASLIRAFINLEAAGVGGKELVFQTGPENPWLVQAYVSAAKHPFASVVAQEVFQSGIIPSDTDFRIYRDFGNIPGIDLAFIENGYIYHTKYDTADRILTDSIQRAGDNILAVLKHLATSDMLAAASKYRHGNMVFFDVLGLFVIAYPSRIGSIINYMVVMGVVLYLGKKFLQPKHKTGNYKKDFLCGLGITLISWFTSLVTVLIIAVFISLIGQSLSWYNHFYVSVCLYGTATVAKIILIHTLAKRFYYMNASAQYLGEVFFDISLFVHCCFLVTLTYQGLCSAFISAVWVAFPLLTKLCVHKDFKQHGAQGKFIAFYLLGMFIPYLYALYLIWAVFEMFTPILGRSGSEIPPDVVLASILAGCTMILSSYFINFIYLAKSTKKTMLTLTLVCAITFLLVCSGTFFPYSSNPANPKPKRVFLQHMTRTFHDLEGNAVKRDSGIWINGFDYTGISHITPHIPEINDSIRAHCEENAPLCGFPWYLPVHFLIRKNWYLPAPEVSPRNPPHFRLISKEQTPWDSIKLTFEATGPSHMSFYVRAHKGSTLSQWSLGNGTPVTSKGGDYFVFYSHGLQASAWQFWIEVQVSEEHPEGMVTVAIAAHYLSGEDKRSPQLDALKEKFPDWTFPSAWVCTYDLFVF</sequence>
<name>ERMP1_HUMAN</name>
<dbReference type="EC" id="3.4.-.-" evidence="10"/>
<dbReference type="EMBL" id="AK026962">
    <property type="protein sequence ID" value="BAB15604.1"/>
    <property type="status" value="ALT_INIT"/>
    <property type="molecule type" value="mRNA"/>
</dbReference>
<dbReference type="EMBL" id="AK093217">
    <property type="protein sequence ID" value="BAG52673.1"/>
    <property type="molecule type" value="mRNA"/>
</dbReference>
<dbReference type="EMBL" id="AK127218">
    <property type="protein sequence ID" value="BAG54455.1"/>
    <property type="molecule type" value="mRNA"/>
</dbReference>
<dbReference type="EMBL" id="AL136980">
    <property type="status" value="NOT_ANNOTATED_CDS"/>
    <property type="molecule type" value="Genomic_DNA"/>
</dbReference>
<dbReference type="EMBL" id="AL365360">
    <property type="status" value="NOT_ANNOTATED_CDS"/>
    <property type="molecule type" value="Genomic_DNA"/>
</dbReference>
<dbReference type="EMBL" id="BC031630">
    <property type="protein sequence ID" value="AAH31630.2"/>
    <property type="molecule type" value="mRNA"/>
</dbReference>
<dbReference type="EMBL" id="BC136771">
    <property type="protein sequence ID" value="AAI36772.1"/>
    <property type="molecule type" value="mRNA"/>
</dbReference>
<dbReference type="EMBL" id="BC136773">
    <property type="protein sequence ID" value="AAI36774.1"/>
    <property type="molecule type" value="mRNA"/>
</dbReference>
<dbReference type="EMBL" id="AB058718">
    <property type="protein sequence ID" value="BAB47444.2"/>
    <property type="molecule type" value="mRNA"/>
</dbReference>
<dbReference type="CCDS" id="CCDS34983.1">
    <molecule id="Q7Z2K6-1"/>
</dbReference>
<dbReference type="RefSeq" id="NP_079172.2">
    <molecule id="Q7Z2K6-1"/>
    <property type="nucleotide sequence ID" value="NM_024896.2"/>
</dbReference>
<dbReference type="SMR" id="Q7Z2K6"/>
<dbReference type="BioGRID" id="123025">
    <property type="interactions" value="194"/>
</dbReference>
<dbReference type="FunCoup" id="Q7Z2K6">
    <property type="interactions" value="1224"/>
</dbReference>
<dbReference type="IntAct" id="Q7Z2K6">
    <property type="interactions" value="127"/>
</dbReference>
<dbReference type="MINT" id="Q7Z2K6"/>
<dbReference type="STRING" id="9606.ENSP00000340427"/>
<dbReference type="MEROPS" id="M28.018"/>
<dbReference type="GlyConnect" id="1205">
    <property type="glycosylation" value="2 N-Linked glycans (1 site)"/>
</dbReference>
<dbReference type="GlyCosmos" id="Q7Z2K6">
    <property type="glycosylation" value="3 sites, 2 glycans"/>
</dbReference>
<dbReference type="GlyGen" id="Q7Z2K6">
    <property type="glycosylation" value="4 sites, 15 N-linked glycans (3 sites), 1 O-linked glycan (1 site)"/>
</dbReference>
<dbReference type="iPTMnet" id="Q7Z2K6"/>
<dbReference type="PhosphoSitePlus" id="Q7Z2K6"/>
<dbReference type="SwissPalm" id="Q7Z2K6"/>
<dbReference type="BioMuta" id="ERMP1"/>
<dbReference type="DMDM" id="117949602"/>
<dbReference type="jPOST" id="Q7Z2K6"/>
<dbReference type="MassIVE" id="Q7Z2K6"/>
<dbReference type="PaxDb" id="9606-ENSP00000340427"/>
<dbReference type="PeptideAtlas" id="Q7Z2K6"/>
<dbReference type="ProteomicsDB" id="3630"/>
<dbReference type="ProteomicsDB" id="68961">
    <molecule id="Q7Z2K6-1"/>
</dbReference>
<dbReference type="Pumba" id="Q7Z2K6"/>
<dbReference type="ABCD" id="Q7Z2K6">
    <property type="antibodies" value="5 sequenced antibodies"/>
</dbReference>
<dbReference type="Antibodypedia" id="54615">
    <property type="antibodies" value="150 antibodies from 24 providers"/>
</dbReference>
<dbReference type="DNASU" id="79956"/>
<dbReference type="Ensembl" id="ENST00000339450.10">
    <molecule id="Q7Z2K6-1"/>
    <property type="protein sequence ID" value="ENSP00000340427.5"/>
    <property type="gene ID" value="ENSG00000099219.15"/>
</dbReference>
<dbReference type="Ensembl" id="ENST00000462592.5">
    <molecule id="Q7Z2K6-1"/>
    <property type="protein sequence ID" value="ENSP00000417160.1"/>
    <property type="gene ID" value="ENSG00000099219.15"/>
</dbReference>
<dbReference type="Ensembl" id="ENST00000487088.6">
    <molecule id="Q7Z2K6-1"/>
    <property type="protein sequence ID" value="ENSP00000432986.2"/>
    <property type="gene ID" value="ENSG00000099219.15"/>
</dbReference>
<dbReference type="Ensembl" id="ENST00000688202.1">
    <molecule id="Q7Z2K6-1"/>
    <property type="protein sequence ID" value="ENSP00000510190.1"/>
    <property type="gene ID" value="ENSG00000099219.15"/>
</dbReference>
<dbReference type="Ensembl" id="ENST00000689268.1">
    <molecule id="Q7Z2K6-1"/>
    <property type="protein sequence ID" value="ENSP00000509900.1"/>
    <property type="gene ID" value="ENSG00000099219.15"/>
</dbReference>
<dbReference type="Ensembl" id="ENST00000689364.1">
    <molecule id="Q7Z2K6-1"/>
    <property type="protein sequence ID" value="ENSP00000509092.1"/>
    <property type="gene ID" value="ENSG00000099219.15"/>
</dbReference>
<dbReference type="Ensembl" id="ENST00000690284.1">
    <molecule id="Q7Z2K6-1"/>
    <property type="protein sequence ID" value="ENSP00000509328.1"/>
    <property type="gene ID" value="ENSG00000099219.15"/>
</dbReference>
<dbReference type="GeneID" id="79956"/>
<dbReference type="KEGG" id="hsa:79956"/>
<dbReference type="MANE-Select" id="ENST00000339450.10">
    <property type="protein sequence ID" value="ENSP00000340427.5"/>
    <property type="RefSeq nucleotide sequence ID" value="NM_024896.3"/>
    <property type="RefSeq protein sequence ID" value="NP_079172.2"/>
</dbReference>
<dbReference type="UCSC" id="uc003zjm.2">
    <molecule id="Q7Z2K6-1"/>
    <property type="organism name" value="human"/>
</dbReference>
<dbReference type="AGR" id="HGNC:23703"/>
<dbReference type="CTD" id="79956"/>
<dbReference type="DisGeNET" id="79956"/>
<dbReference type="GeneCards" id="ERMP1"/>
<dbReference type="HGNC" id="HGNC:23703">
    <property type="gene designation" value="ERMP1"/>
</dbReference>
<dbReference type="HPA" id="ENSG00000099219">
    <property type="expression patterns" value="Tissue enhanced (parathyroid)"/>
</dbReference>
<dbReference type="MIM" id="611156">
    <property type="type" value="gene"/>
</dbReference>
<dbReference type="neXtProt" id="NX_Q7Z2K6"/>
<dbReference type="OpenTargets" id="ENSG00000099219"/>
<dbReference type="PharmGKB" id="PA162385366"/>
<dbReference type="VEuPathDB" id="HostDB:ENSG00000099219"/>
<dbReference type="eggNOG" id="KOG2194">
    <property type="taxonomic scope" value="Eukaryota"/>
</dbReference>
<dbReference type="GeneTree" id="ENSGT00530000063839"/>
<dbReference type="HOGENOM" id="CLU_007536_2_0_1"/>
<dbReference type="InParanoid" id="Q7Z2K6"/>
<dbReference type="OMA" id="WNNTIGA"/>
<dbReference type="OrthoDB" id="76293at2759"/>
<dbReference type="PAN-GO" id="Q7Z2K6">
    <property type="GO annotations" value="1 GO annotation based on evolutionary models"/>
</dbReference>
<dbReference type="PhylomeDB" id="Q7Z2K6"/>
<dbReference type="TreeFam" id="TF314836"/>
<dbReference type="PathwayCommons" id="Q7Z2K6"/>
<dbReference type="SignaLink" id="Q7Z2K6"/>
<dbReference type="SIGNOR" id="Q7Z2K6"/>
<dbReference type="BioGRID-ORCS" id="79956">
    <property type="hits" value="13 hits in 1163 CRISPR screens"/>
</dbReference>
<dbReference type="ChiTaRS" id="ERMP1">
    <property type="organism name" value="human"/>
</dbReference>
<dbReference type="GenomeRNAi" id="79956"/>
<dbReference type="Pharos" id="Q7Z2K6">
    <property type="development level" value="Tbio"/>
</dbReference>
<dbReference type="PRO" id="PR:Q7Z2K6"/>
<dbReference type="Proteomes" id="UP000005640">
    <property type="component" value="Chromosome 9"/>
</dbReference>
<dbReference type="RNAct" id="Q7Z2K6">
    <property type="molecule type" value="protein"/>
</dbReference>
<dbReference type="Bgee" id="ENSG00000099219">
    <property type="expression patterns" value="Expressed in palpebral conjunctiva and 206 other cell types or tissues"/>
</dbReference>
<dbReference type="ExpressionAtlas" id="Q7Z2K6">
    <property type="expression patterns" value="baseline and differential"/>
</dbReference>
<dbReference type="GO" id="GO:0005789">
    <property type="term" value="C:endoplasmic reticulum membrane"/>
    <property type="evidence" value="ECO:0007669"/>
    <property type="project" value="UniProtKB-SubCell"/>
</dbReference>
<dbReference type="GO" id="GO:0016020">
    <property type="term" value="C:membrane"/>
    <property type="evidence" value="ECO:0007005"/>
    <property type="project" value="UniProtKB"/>
</dbReference>
<dbReference type="GO" id="GO:0046872">
    <property type="term" value="F:metal ion binding"/>
    <property type="evidence" value="ECO:0007669"/>
    <property type="project" value="UniProtKB-KW"/>
</dbReference>
<dbReference type="GO" id="GO:0008235">
    <property type="term" value="F:metalloexopeptidase activity"/>
    <property type="evidence" value="ECO:0007669"/>
    <property type="project" value="InterPro"/>
</dbReference>
<dbReference type="GO" id="GO:0034599">
    <property type="term" value="P:cellular response to oxidative stress"/>
    <property type="evidence" value="ECO:0000315"/>
    <property type="project" value="FlyBase"/>
</dbReference>
<dbReference type="GO" id="GO:0030968">
    <property type="term" value="P:endoplasmic reticulum unfolded protein response"/>
    <property type="evidence" value="ECO:0000315"/>
    <property type="project" value="FlyBase"/>
</dbReference>
<dbReference type="GO" id="GO:0006508">
    <property type="term" value="P:proteolysis"/>
    <property type="evidence" value="ECO:0000318"/>
    <property type="project" value="GO_Central"/>
</dbReference>
<dbReference type="CDD" id="cd03875">
    <property type="entry name" value="M28_Fxna_like"/>
    <property type="match status" value="1"/>
</dbReference>
<dbReference type="FunFam" id="3.40.630.10:FF:000008">
    <property type="entry name" value="Endoplasmic reticulum metallopeptidase 1"/>
    <property type="match status" value="1"/>
</dbReference>
<dbReference type="Gene3D" id="3.40.630.10">
    <property type="entry name" value="Zn peptidases"/>
    <property type="match status" value="1"/>
</dbReference>
<dbReference type="InterPro" id="IPR053973">
    <property type="entry name" value="ERMP1-like_C"/>
</dbReference>
<dbReference type="InterPro" id="IPR053974">
    <property type="entry name" value="ERMP1_1-A_TM"/>
</dbReference>
<dbReference type="InterPro" id="IPR048024">
    <property type="entry name" value="Fxna-like_M28_dom"/>
</dbReference>
<dbReference type="InterPro" id="IPR045175">
    <property type="entry name" value="M28_fam"/>
</dbReference>
<dbReference type="InterPro" id="IPR007484">
    <property type="entry name" value="Peptidase_M28"/>
</dbReference>
<dbReference type="PANTHER" id="PTHR12147:SF22">
    <property type="entry name" value="ENDOPLASMIC RETICULUM METALLOPEPTIDASE 1"/>
    <property type="match status" value="1"/>
</dbReference>
<dbReference type="PANTHER" id="PTHR12147">
    <property type="entry name" value="METALLOPEPTIDASE M28 FAMILY MEMBER"/>
    <property type="match status" value="1"/>
</dbReference>
<dbReference type="Pfam" id="PF22249">
    <property type="entry name" value="ERMP1-TM"/>
    <property type="match status" value="1"/>
</dbReference>
<dbReference type="Pfam" id="PF22248">
    <property type="entry name" value="ERMP1_C"/>
    <property type="match status" value="1"/>
</dbReference>
<dbReference type="Pfam" id="PF04389">
    <property type="entry name" value="Peptidase_M28"/>
    <property type="match status" value="1"/>
</dbReference>
<dbReference type="SUPFAM" id="SSF53187">
    <property type="entry name" value="Zn-dependent exopeptidases"/>
    <property type="match status" value="1"/>
</dbReference>
<organism>
    <name type="scientific">Homo sapiens</name>
    <name type="common">Human</name>
    <dbReference type="NCBI Taxonomy" id="9606"/>
    <lineage>
        <taxon>Eukaryota</taxon>
        <taxon>Metazoa</taxon>
        <taxon>Chordata</taxon>
        <taxon>Craniata</taxon>
        <taxon>Vertebrata</taxon>
        <taxon>Euteleostomi</taxon>
        <taxon>Mammalia</taxon>
        <taxon>Eutheria</taxon>
        <taxon>Euarchontoglires</taxon>
        <taxon>Primates</taxon>
        <taxon>Haplorrhini</taxon>
        <taxon>Catarrhini</taxon>
        <taxon>Hominidae</taxon>
        <taxon>Homo</taxon>
    </lineage>
</organism>
<evidence type="ECO:0000250" key="1"/>
<evidence type="ECO:0000250" key="2">
    <source>
        <dbReference type="UniProtKB" id="P80561"/>
    </source>
</evidence>
<evidence type="ECO:0000250" key="3">
    <source>
        <dbReference type="UniProtKB" id="Q6UPR8"/>
    </source>
</evidence>
<evidence type="ECO:0000255" key="4"/>
<evidence type="ECO:0000255" key="5">
    <source>
        <dbReference type="PROSITE-ProRule" id="PRU00498"/>
    </source>
</evidence>
<evidence type="ECO:0000256" key="6">
    <source>
        <dbReference type="SAM" id="MobiDB-lite"/>
    </source>
</evidence>
<evidence type="ECO:0000269" key="7">
    <source>
    </source>
</evidence>
<evidence type="ECO:0000303" key="8">
    <source>
    </source>
</evidence>
<evidence type="ECO:0000303" key="9">
    <source>
    </source>
</evidence>
<evidence type="ECO:0000305" key="10"/>
<evidence type="ECO:0000312" key="11">
    <source>
        <dbReference type="HGNC" id="HGNC:23703"/>
    </source>
</evidence>
<evidence type="ECO:0007744" key="12">
    <source>
    </source>
</evidence>